<evidence type="ECO:0000255" key="1">
    <source>
        <dbReference type="HAMAP-Rule" id="MF_01318"/>
    </source>
</evidence>
<evidence type="ECO:0000305" key="2"/>
<proteinExistence type="inferred from homology"/>
<dbReference type="EMBL" id="CP000239">
    <property type="protein sequence ID" value="ABC99934.1"/>
    <property type="molecule type" value="Genomic_DNA"/>
</dbReference>
<dbReference type="RefSeq" id="WP_011430610.1">
    <property type="nucleotide sequence ID" value="NC_007775.1"/>
</dbReference>
<dbReference type="SMR" id="Q2JTQ5"/>
<dbReference type="STRING" id="321327.CYA_1780"/>
<dbReference type="KEGG" id="cya:CYA_1780"/>
<dbReference type="eggNOG" id="COG0081">
    <property type="taxonomic scope" value="Bacteria"/>
</dbReference>
<dbReference type="HOGENOM" id="CLU_062853_0_0_3"/>
<dbReference type="OrthoDB" id="9803740at2"/>
<dbReference type="Proteomes" id="UP000008818">
    <property type="component" value="Chromosome"/>
</dbReference>
<dbReference type="GO" id="GO:0015934">
    <property type="term" value="C:large ribosomal subunit"/>
    <property type="evidence" value="ECO:0007669"/>
    <property type="project" value="InterPro"/>
</dbReference>
<dbReference type="GO" id="GO:0019843">
    <property type="term" value="F:rRNA binding"/>
    <property type="evidence" value="ECO:0007669"/>
    <property type="project" value="UniProtKB-UniRule"/>
</dbReference>
<dbReference type="GO" id="GO:0003735">
    <property type="term" value="F:structural constituent of ribosome"/>
    <property type="evidence" value="ECO:0007669"/>
    <property type="project" value="InterPro"/>
</dbReference>
<dbReference type="GO" id="GO:0000049">
    <property type="term" value="F:tRNA binding"/>
    <property type="evidence" value="ECO:0007669"/>
    <property type="project" value="UniProtKB-KW"/>
</dbReference>
<dbReference type="GO" id="GO:0006417">
    <property type="term" value="P:regulation of translation"/>
    <property type="evidence" value="ECO:0007669"/>
    <property type="project" value="UniProtKB-KW"/>
</dbReference>
<dbReference type="GO" id="GO:0006412">
    <property type="term" value="P:translation"/>
    <property type="evidence" value="ECO:0007669"/>
    <property type="project" value="UniProtKB-UniRule"/>
</dbReference>
<dbReference type="CDD" id="cd00403">
    <property type="entry name" value="Ribosomal_L1"/>
    <property type="match status" value="1"/>
</dbReference>
<dbReference type="FunFam" id="3.40.50.790:FF:000001">
    <property type="entry name" value="50S ribosomal protein L1"/>
    <property type="match status" value="1"/>
</dbReference>
<dbReference type="Gene3D" id="3.30.190.20">
    <property type="match status" value="1"/>
</dbReference>
<dbReference type="Gene3D" id="3.40.50.790">
    <property type="match status" value="1"/>
</dbReference>
<dbReference type="HAMAP" id="MF_01318_B">
    <property type="entry name" value="Ribosomal_uL1_B"/>
    <property type="match status" value="1"/>
</dbReference>
<dbReference type="InterPro" id="IPR005878">
    <property type="entry name" value="Ribosom_uL1_bac-type"/>
</dbReference>
<dbReference type="InterPro" id="IPR002143">
    <property type="entry name" value="Ribosomal_uL1"/>
</dbReference>
<dbReference type="InterPro" id="IPR023674">
    <property type="entry name" value="Ribosomal_uL1-like"/>
</dbReference>
<dbReference type="InterPro" id="IPR028364">
    <property type="entry name" value="Ribosomal_uL1/biogenesis"/>
</dbReference>
<dbReference type="InterPro" id="IPR016095">
    <property type="entry name" value="Ribosomal_uL1_3-a/b-sand"/>
</dbReference>
<dbReference type="InterPro" id="IPR023673">
    <property type="entry name" value="Ribosomal_uL1_CS"/>
</dbReference>
<dbReference type="NCBIfam" id="TIGR01169">
    <property type="entry name" value="rplA_bact"/>
    <property type="match status" value="1"/>
</dbReference>
<dbReference type="PANTHER" id="PTHR36427">
    <property type="entry name" value="54S RIBOSOMAL PROTEIN L1, MITOCHONDRIAL"/>
    <property type="match status" value="1"/>
</dbReference>
<dbReference type="PANTHER" id="PTHR36427:SF3">
    <property type="entry name" value="LARGE RIBOSOMAL SUBUNIT PROTEIN UL1M"/>
    <property type="match status" value="1"/>
</dbReference>
<dbReference type="Pfam" id="PF00687">
    <property type="entry name" value="Ribosomal_L1"/>
    <property type="match status" value="1"/>
</dbReference>
<dbReference type="PIRSF" id="PIRSF002155">
    <property type="entry name" value="Ribosomal_L1"/>
    <property type="match status" value="1"/>
</dbReference>
<dbReference type="SUPFAM" id="SSF56808">
    <property type="entry name" value="Ribosomal protein L1"/>
    <property type="match status" value="1"/>
</dbReference>
<dbReference type="PROSITE" id="PS01199">
    <property type="entry name" value="RIBOSOMAL_L1"/>
    <property type="match status" value="1"/>
</dbReference>
<protein>
    <recommendedName>
        <fullName evidence="1">Large ribosomal subunit protein uL1</fullName>
    </recommendedName>
    <alternativeName>
        <fullName evidence="2">50S ribosomal protein L1</fullName>
    </alternativeName>
</protein>
<name>RL1_SYNJA</name>
<feature type="chain" id="PRO_0000308128" description="Large ribosomal subunit protein uL1">
    <location>
        <begin position="1"/>
        <end position="236"/>
    </location>
</feature>
<reference key="1">
    <citation type="journal article" date="2007" name="ISME J.">
        <title>Population level functional diversity in a microbial community revealed by comparative genomic and metagenomic analyses.</title>
        <authorList>
            <person name="Bhaya D."/>
            <person name="Grossman A.R."/>
            <person name="Steunou A.-S."/>
            <person name="Khuri N."/>
            <person name="Cohan F.M."/>
            <person name="Hamamura N."/>
            <person name="Melendrez M.C."/>
            <person name="Bateson M.M."/>
            <person name="Ward D.M."/>
            <person name="Heidelberg J.F."/>
        </authorList>
    </citation>
    <scope>NUCLEOTIDE SEQUENCE [LARGE SCALE GENOMIC DNA]</scope>
    <source>
        <strain>JA-3-3Ab</strain>
    </source>
</reference>
<sequence length="236" mass="25816">MARKLSKRMQALREKVKPIAYPPAEALALMKETATAKFDEAAEVHIRLGIDPKYADQQLRTTVVLPRGTGQEIRVAVIARGEKVTEAQNAGADRVGFEDLIEEIGKGVIDFDLLIATPDVMPQVAKLGRLLGPRGLMPSPKGGTVTMDLAQAIKEFKAGKLEYRADKTGIVHLIFGKCKFPVEALLENLKAVQESIDRNRPPGAKGKYWRALHVCATMGPSIEVDINALRELKLVA</sequence>
<keyword id="KW-0678">Repressor</keyword>
<keyword id="KW-0687">Ribonucleoprotein</keyword>
<keyword id="KW-0689">Ribosomal protein</keyword>
<keyword id="KW-0694">RNA-binding</keyword>
<keyword id="KW-0699">rRNA-binding</keyword>
<keyword id="KW-0810">Translation regulation</keyword>
<keyword id="KW-0820">tRNA-binding</keyword>
<organism>
    <name type="scientific">Synechococcus sp. (strain JA-3-3Ab)</name>
    <name type="common">Cyanobacteria bacterium Yellowstone A-Prime</name>
    <dbReference type="NCBI Taxonomy" id="321327"/>
    <lineage>
        <taxon>Bacteria</taxon>
        <taxon>Bacillati</taxon>
        <taxon>Cyanobacteriota</taxon>
        <taxon>Cyanophyceae</taxon>
        <taxon>Synechococcales</taxon>
        <taxon>Synechococcaceae</taxon>
        <taxon>Synechococcus</taxon>
    </lineage>
</organism>
<comment type="function">
    <text evidence="1">Binds directly to 23S rRNA. The L1 stalk is quite mobile in the ribosome, and is involved in E site tRNA release.</text>
</comment>
<comment type="function">
    <text evidence="1">Protein L1 is also a translational repressor protein, it controls the translation of the L11 operon by binding to its mRNA.</text>
</comment>
<comment type="subunit">
    <text evidence="1">Part of the 50S ribosomal subunit.</text>
</comment>
<comment type="similarity">
    <text evidence="1">Belongs to the universal ribosomal protein uL1 family.</text>
</comment>
<accession>Q2JTQ5</accession>
<gene>
    <name evidence="1" type="primary">rplA</name>
    <name evidence="1" type="synonym">rpl1</name>
    <name type="ordered locus">CYA_1780</name>
</gene>